<name>GPX1_SYNY3</name>
<dbReference type="EC" id="1.11.1.22"/>
<dbReference type="EMBL" id="BA000022">
    <property type="protein sequence ID" value="BAA18344.1"/>
    <property type="molecule type" value="Genomic_DNA"/>
</dbReference>
<dbReference type="PIR" id="S75885">
    <property type="entry name" value="S75885"/>
</dbReference>
<dbReference type="SMR" id="P74250"/>
<dbReference type="FunCoup" id="P74250">
    <property type="interactions" value="263"/>
</dbReference>
<dbReference type="STRING" id="1148.gene:10499220"/>
<dbReference type="PeroxiBase" id="3755">
    <property type="entry name" value="SYspGPx01"/>
</dbReference>
<dbReference type="PaxDb" id="1148-1653430"/>
<dbReference type="EnsemblBacteria" id="BAA18344">
    <property type="protein sequence ID" value="BAA18344"/>
    <property type="gene ID" value="BAA18344"/>
</dbReference>
<dbReference type="KEGG" id="syn:slr1171"/>
<dbReference type="eggNOG" id="COG0386">
    <property type="taxonomic scope" value="Bacteria"/>
</dbReference>
<dbReference type="InParanoid" id="P74250"/>
<dbReference type="PhylomeDB" id="P74250"/>
<dbReference type="BioCyc" id="MetaCyc:MONOMER-17842"/>
<dbReference type="Proteomes" id="UP000001425">
    <property type="component" value="Chromosome"/>
</dbReference>
<dbReference type="GO" id="GO:0004601">
    <property type="term" value="F:peroxidase activity"/>
    <property type="evidence" value="ECO:0007669"/>
    <property type="project" value="UniProtKB-KW"/>
</dbReference>
<dbReference type="GO" id="GO:0034599">
    <property type="term" value="P:cellular response to oxidative stress"/>
    <property type="evidence" value="ECO:0000318"/>
    <property type="project" value="GO_Central"/>
</dbReference>
<dbReference type="CDD" id="cd00340">
    <property type="entry name" value="GSH_Peroxidase"/>
    <property type="match status" value="1"/>
</dbReference>
<dbReference type="FunFam" id="3.40.30.10:FF:000010">
    <property type="entry name" value="Glutathione peroxidase"/>
    <property type="match status" value="1"/>
</dbReference>
<dbReference type="Gene3D" id="3.40.30.10">
    <property type="entry name" value="Glutaredoxin"/>
    <property type="match status" value="1"/>
</dbReference>
<dbReference type="InterPro" id="IPR000889">
    <property type="entry name" value="Glutathione_peroxidase"/>
</dbReference>
<dbReference type="InterPro" id="IPR029759">
    <property type="entry name" value="GPX_AS"/>
</dbReference>
<dbReference type="InterPro" id="IPR029760">
    <property type="entry name" value="GPX_CS"/>
</dbReference>
<dbReference type="InterPro" id="IPR036249">
    <property type="entry name" value="Thioredoxin-like_sf"/>
</dbReference>
<dbReference type="InterPro" id="IPR013766">
    <property type="entry name" value="Thioredoxin_domain"/>
</dbReference>
<dbReference type="PANTHER" id="PTHR11592">
    <property type="entry name" value="GLUTATHIONE PEROXIDASE"/>
    <property type="match status" value="1"/>
</dbReference>
<dbReference type="PANTHER" id="PTHR11592:SF78">
    <property type="entry name" value="GLUTATHIONE PEROXIDASE"/>
    <property type="match status" value="1"/>
</dbReference>
<dbReference type="Pfam" id="PF00255">
    <property type="entry name" value="GSHPx"/>
    <property type="match status" value="1"/>
</dbReference>
<dbReference type="PIRSF" id="PIRSF000303">
    <property type="entry name" value="Glutathion_perox"/>
    <property type="match status" value="1"/>
</dbReference>
<dbReference type="PRINTS" id="PR01011">
    <property type="entry name" value="GLUTPROXDASE"/>
</dbReference>
<dbReference type="SUPFAM" id="SSF52833">
    <property type="entry name" value="Thioredoxin-like"/>
    <property type="match status" value="1"/>
</dbReference>
<dbReference type="PROSITE" id="PS00460">
    <property type="entry name" value="GLUTATHIONE_PEROXID_1"/>
    <property type="match status" value="1"/>
</dbReference>
<dbReference type="PROSITE" id="PS00763">
    <property type="entry name" value="GLUTATHIONE_PEROXID_2"/>
    <property type="match status" value="1"/>
</dbReference>
<dbReference type="PROSITE" id="PS51355">
    <property type="entry name" value="GLUTATHIONE_PEROXID_3"/>
    <property type="match status" value="1"/>
</dbReference>
<accession>P74250</accession>
<proteinExistence type="evidence at protein level"/>
<organism>
    <name type="scientific">Synechocystis sp. (strain ATCC 27184 / PCC 6803 / Kazusa)</name>
    <dbReference type="NCBI Taxonomy" id="1111708"/>
    <lineage>
        <taxon>Bacteria</taxon>
        <taxon>Bacillati</taxon>
        <taxon>Cyanobacteriota</taxon>
        <taxon>Cyanophyceae</taxon>
        <taxon>Synechococcales</taxon>
        <taxon>Merismopediaceae</taxon>
        <taxon>Synechocystis</taxon>
    </lineage>
</organism>
<gene>
    <name type="primary">gpx1</name>
    <name type="ordered locus">slr1171</name>
</gene>
<evidence type="ECO:0000250" key="1"/>
<evidence type="ECO:0000269" key="2">
    <source>
    </source>
</evidence>
<evidence type="ECO:0000269" key="3">
    <source>
    </source>
</evidence>
<evidence type="ECO:0000305" key="4"/>
<comment type="function">
    <text evidence="3">Hydroperoxy fatty acid reductase essential for the removal of lipid hydroperoxides under normal and stress conditions, leading to the protection of membrane integrity.</text>
</comment>
<comment type="catalytic activity">
    <reaction evidence="2">
        <text>a hydroperoxy polyunsaturated fatty acid + NADPH + H(+) = a hydroxy polyunsaturated fatty acid + NADP(+) + H2O</text>
        <dbReference type="Rhea" id="RHEA:50876"/>
        <dbReference type="ChEBI" id="CHEBI:15377"/>
        <dbReference type="ChEBI" id="CHEBI:15378"/>
        <dbReference type="ChEBI" id="CHEBI:57783"/>
        <dbReference type="ChEBI" id="CHEBI:58349"/>
        <dbReference type="ChEBI" id="CHEBI:131871"/>
        <dbReference type="ChEBI" id="CHEBI:134019"/>
        <dbReference type="EC" id="1.11.1.22"/>
    </reaction>
</comment>
<comment type="activity regulation">
    <text evidence="2">Mercaptosuccinate, pCMB, and nethylmaleimide act as inhibitors of the catalytic activity.</text>
</comment>
<comment type="biophysicochemical properties">
    <kinetics>
        <KM evidence="2">83.1 uM for NADPH</KM>
        <KM evidence="2">215 uM for alpha-linolenic acid hydroperoxide</KM>
    </kinetics>
    <phDependence>
        <text evidence="2">Optimum pH is 8.2.</text>
    </phDependence>
    <temperatureDependence>
        <text evidence="2">Optimum temperature is 37 degrees Celsius.</text>
    </temperatureDependence>
</comment>
<comment type="subunit">
    <text evidence="2">Monomer.</text>
</comment>
<comment type="induction">
    <text evidence="3">High light, methylviologen, t-butyl hydroperoxide, and salt stress conditions increase the expression level.</text>
</comment>
<comment type="similarity">
    <text evidence="4">Belongs to the glutathione peroxidase family.</text>
</comment>
<feature type="chain" id="PRO_0000066663" description="Hydroperoxy fatty acid reductase gpx1">
    <location>
        <begin position="1"/>
        <end position="169"/>
    </location>
</feature>
<feature type="active site" evidence="1">
    <location>
        <position position="41"/>
    </location>
</feature>
<reference key="1">
    <citation type="journal article" date="1996" name="DNA Res.">
        <title>Sequence analysis of the genome of the unicellular cyanobacterium Synechocystis sp. strain PCC6803. II. Sequence determination of the entire genome and assignment of potential protein-coding regions.</title>
        <authorList>
            <person name="Kaneko T."/>
            <person name="Sato S."/>
            <person name="Kotani H."/>
            <person name="Tanaka A."/>
            <person name="Asamizu E."/>
            <person name="Nakamura Y."/>
            <person name="Miyajima N."/>
            <person name="Hirosawa M."/>
            <person name="Sugiura M."/>
            <person name="Sasamoto S."/>
            <person name="Kimura T."/>
            <person name="Hosouchi T."/>
            <person name="Matsuno A."/>
            <person name="Muraki A."/>
            <person name="Nakazaki N."/>
            <person name="Naruo K."/>
            <person name="Okumura S."/>
            <person name="Shimpo S."/>
            <person name="Takeuchi C."/>
            <person name="Wada T."/>
            <person name="Watanabe A."/>
            <person name="Yamada M."/>
            <person name="Yasuda M."/>
            <person name="Tabata S."/>
        </authorList>
    </citation>
    <scope>NUCLEOTIDE SEQUENCE [LARGE SCALE GENOMIC DNA]</scope>
    <source>
        <strain>ATCC 27184 / PCC 6803 / Kazusa</strain>
    </source>
</reference>
<reference key="2">
    <citation type="journal article" date="2001" name="FEBS Lett.">
        <title>NADPH-dependent glutathione peroxidase-like proteins (Gpx-1, Gpx-2) reduce unsaturated fatty acid hydroperoxides in Synechocystis PCC 6803.</title>
        <authorList>
            <person name="Gaber A."/>
            <person name="Tamoi M."/>
            <person name="Takeda T."/>
            <person name="Nakano Y."/>
            <person name="Shigeoka S."/>
        </authorList>
    </citation>
    <scope>SUBUNIT</scope>
    <scope>CATALYTIC ACTIVITY</scope>
    <scope>BIOPHYSICOCHEMICAL PROPERTIES</scope>
    <scope>ACTIVITY REGULATION</scope>
</reference>
<reference key="3">
    <citation type="journal article" date="2004" name="Plant Physiol.">
        <title>Induction and functional analysis of two reduced nicotinamide adenine dinucleotide phosphate-dependent glutathione peroxidase-like proteins in Synechocystis PCC 6803 during the progression of oxidative stress.</title>
        <authorList>
            <person name="Gaber A."/>
            <person name="Yoshimura K."/>
            <person name="Tamoi M."/>
            <person name="Takeda T."/>
            <person name="Nakano Y."/>
            <person name="Shigeoka S."/>
        </authorList>
    </citation>
    <scope>INDUCTION</scope>
    <scope>FUNCTION</scope>
</reference>
<protein>
    <recommendedName>
        <fullName>Hydroperoxy fatty acid reductase gpx1</fullName>
        <ecNumber>1.11.1.22</ecNumber>
    </recommendedName>
</protein>
<keyword id="KW-0521">NADP</keyword>
<keyword id="KW-0560">Oxidoreductase</keyword>
<keyword id="KW-0575">Peroxidase</keyword>
<keyword id="KW-1185">Reference proteome</keyword>
<sequence>MTAQANNTIYGFSANALDGSPVALRDFEGKVLLIVNTASQCGFTPQYQGLQALYNRFGDRGFTVLGFPCNQFGQQEPGGSGEIKNFCETRYGVTFPLFEKVEVNGPNAHPLFKFLTAASPGMAIPFLGGAEDIKWNFTKFLVDRQGKVVKRYGSIAKPDEIAADIEKLL</sequence>